<protein>
    <recommendedName>
        <fullName>Probable ATP-dependent RNA helicase DDX46</fullName>
        <ecNumber>3.6.4.13</ecNumber>
    </recommendedName>
    <alternativeName>
        <fullName>DEAD box protein 46</fullName>
    </alternativeName>
    <alternativeName>
        <fullName evidence="12">PRP5 homolog</fullName>
    </alternativeName>
</protein>
<gene>
    <name evidence="13 16" type="primary">DDX46</name>
    <name evidence="14" type="synonym">KIAA0801</name>
</gene>
<proteinExistence type="evidence at protein level"/>
<feature type="initiator methionine" description="Removed" evidence="8">
    <location>
        <position position="1"/>
    </location>
</feature>
<feature type="chain" id="PRO_0000055121" description="Probable ATP-dependent RNA helicase DDX46">
    <location>
        <begin position="2"/>
        <end position="1031"/>
    </location>
</feature>
<feature type="domain" description="Helicase ATP-binding" evidence="4">
    <location>
        <begin position="403"/>
        <end position="581"/>
    </location>
</feature>
<feature type="domain" description="Helicase C-terminal" evidence="5">
    <location>
        <begin position="592"/>
        <end position="753"/>
    </location>
</feature>
<feature type="region of interest" description="Disordered" evidence="6">
    <location>
        <begin position="1"/>
        <end position="228"/>
    </location>
</feature>
<feature type="coiled-coil region" evidence="3">
    <location>
        <begin position="152"/>
        <end position="197"/>
    </location>
</feature>
<feature type="short sequence motif" description="Q motif">
    <location>
        <begin position="372"/>
        <end position="400"/>
    </location>
</feature>
<feature type="short sequence motif" description="DEAD box">
    <location>
        <begin position="529"/>
        <end position="532"/>
    </location>
</feature>
<feature type="compositionally biased region" description="Basic residues" evidence="6">
    <location>
        <begin position="1"/>
        <end position="24"/>
    </location>
</feature>
<feature type="compositionally biased region" description="Basic and acidic residues" evidence="6">
    <location>
        <begin position="26"/>
        <end position="49"/>
    </location>
</feature>
<feature type="compositionally biased region" description="Basic residues" evidence="6">
    <location>
        <begin position="50"/>
        <end position="73"/>
    </location>
</feature>
<feature type="compositionally biased region" description="Basic residues" evidence="6">
    <location>
        <begin position="81"/>
        <end position="103"/>
    </location>
</feature>
<feature type="compositionally biased region" description="Basic and acidic residues" evidence="6">
    <location>
        <begin position="112"/>
        <end position="200"/>
    </location>
</feature>
<feature type="compositionally biased region" description="Acidic residues" evidence="6">
    <location>
        <begin position="201"/>
        <end position="211"/>
    </location>
</feature>
<feature type="compositionally biased region" description="Acidic residues" evidence="6">
    <location>
        <begin position="219"/>
        <end position="228"/>
    </location>
</feature>
<feature type="binding site" evidence="4">
    <location>
        <begin position="416"/>
        <end position="423"/>
    </location>
    <ligand>
        <name>ATP</name>
        <dbReference type="ChEBI" id="CHEBI:30616"/>
    </ligand>
</feature>
<feature type="modified residue" description="Phosphoserine" evidence="2">
    <location>
        <position position="199"/>
    </location>
</feature>
<feature type="modified residue" description="N6-acetyllysine" evidence="23">
    <location>
        <position position="263"/>
    </location>
</feature>
<feature type="modified residue" description="Phosphotyrosine" evidence="22 24">
    <location>
        <position position="294"/>
    </location>
</feature>
<feature type="modified residue" description="Phosphoserine" evidence="22 24">
    <location>
        <position position="295"/>
    </location>
</feature>
<feature type="modified residue" description="Phosphoserine" evidence="22 24">
    <location>
        <position position="296"/>
    </location>
</feature>
<feature type="modified residue" description="Phosphoserine" evidence="27">
    <location>
        <position position="346"/>
    </location>
</feature>
<feature type="modified residue" description="N6-acetyllysine" evidence="23">
    <location>
        <position position="776"/>
    </location>
</feature>
<feature type="modified residue" description="Phosphoserine" evidence="21 22 24 25 26 27">
    <location>
        <position position="804"/>
    </location>
</feature>
<feature type="modified residue" description="N6-acetyllysine" evidence="1">
    <location>
        <position position="903"/>
    </location>
</feature>
<feature type="modified residue" description="Phosphoserine" evidence="27">
    <location>
        <position position="928"/>
    </location>
</feature>
<feature type="lipid moiety-binding region" description="N-myristoyl glycine" evidence="8">
    <location>
        <position position="2"/>
    </location>
</feature>
<feature type="cross-link" description="Glycyl lysine isopeptide (Lys-Gly) (interchain with G-Cter in SUMO2)" evidence="28 29 30">
    <location>
        <position position="186"/>
    </location>
</feature>
<feature type="cross-link" description="Glycyl lysine isopeptide (Lys-Gly) (interchain with G-Cter in SUMO2)" evidence="30">
    <location>
        <position position="325"/>
    </location>
</feature>
<feature type="cross-link" description="Glycyl lysine isopeptide (Lys-Gly) (interchain with G-Cter in SUMO2)" evidence="30">
    <location>
        <position position="779"/>
    </location>
</feature>
<feature type="cross-link" description="Glycyl lysine isopeptide (Lys-Gly) (interchain with G-Cter in SUMO2)" evidence="30">
    <location>
        <position position="907"/>
    </location>
</feature>
<feature type="cross-link" description="Glycyl lysine isopeptide (Lys-Gly) (interchain with G-Cter in SUMO2)" evidence="30">
    <location>
        <position position="915"/>
    </location>
</feature>
<feature type="sequence variant" id="VAR_028079" description="In dbSNP:rs10447293.">
    <original>E</original>
    <variation>Q</variation>
    <location>
        <position position="207"/>
    </location>
</feature>
<feature type="sequence conflict" description="In Ref. 1; AAD43033." evidence="15" ref="1">
    <original>N</original>
    <variation>S</variation>
    <location>
        <position position="109"/>
    </location>
</feature>
<feature type="sequence conflict" description="In Ref. 1; AAD43033." evidence="15" ref="1">
    <original>T</original>
    <variation>A</variation>
    <location>
        <position position="114"/>
    </location>
</feature>
<feature type="sequence conflict" description="In Ref. 1; AAD43033." evidence="15" ref="1">
    <original>TD</original>
    <variation>AE</variation>
    <location>
        <begin position="124"/>
        <end position="125"/>
    </location>
</feature>
<feature type="sequence conflict" description="In Ref. 1; AAD43033." evidence="15" ref="1">
    <original>E</original>
    <variation>D</variation>
    <location>
        <position position="128"/>
    </location>
</feature>
<feature type="sequence conflict" description="In Ref. 1; AAD43033." evidence="15" ref="1">
    <original>G</original>
    <variation>D</variation>
    <location>
        <position position="222"/>
    </location>
</feature>
<feature type="sequence conflict" description="In Ref. 1; AAD43033." evidence="15" ref="1">
    <original>G</original>
    <variation>A</variation>
    <location>
        <position position="251"/>
    </location>
</feature>
<feature type="sequence conflict" description="In Ref. 1; AAD43033." evidence="15" ref="1">
    <original>I</original>
    <variation>L</variation>
    <location>
        <position position="447"/>
    </location>
</feature>
<feature type="sequence conflict" description="In Ref. 1; AAD43033." evidence="15" ref="1">
    <original>TKECKKFS</original>
    <variation>PKGVRSF</variation>
    <location>
        <begin position="462"/>
        <end position="469"/>
    </location>
</feature>
<feature type="sequence conflict" description="In Ref. 1; AAD43033 and 2; BAA34521." evidence="15" ref="1 2">
    <original>Q</original>
    <variation>QV</variation>
    <location>
        <position position="870"/>
    </location>
</feature>
<feature type="helix" evidence="32">
    <location>
        <begin position="159"/>
        <end position="173"/>
    </location>
</feature>
<feature type="helix" evidence="31">
    <location>
        <begin position="227"/>
        <end position="242"/>
    </location>
</feature>
<feature type="helix" evidence="31">
    <location>
        <begin position="352"/>
        <end position="357"/>
    </location>
</feature>
<feature type="strand" evidence="31">
    <location>
        <begin position="362"/>
        <end position="366"/>
    </location>
</feature>
<feature type="helix" evidence="31">
    <location>
        <begin position="374"/>
        <end position="376"/>
    </location>
</feature>
<feature type="helix" evidence="31">
    <location>
        <begin position="381"/>
        <end position="390"/>
    </location>
</feature>
<feature type="helix" evidence="31">
    <location>
        <begin position="397"/>
        <end position="407"/>
    </location>
</feature>
<feature type="strand" evidence="31">
    <location>
        <begin position="412"/>
        <end position="415"/>
    </location>
</feature>
<feature type="helix" evidence="31">
    <location>
        <begin position="422"/>
        <end position="436"/>
    </location>
</feature>
<feature type="strand" evidence="31">
    <location>
        <begin position="447"/>
        <end position="451"/>
    </location>
</feature>
<feature type="helix" evidence="31">
    <location>
        <begin position="455"/>
        <end position="468"/>
    </location>
</feature>
<feature type="turn" evidence="31">
    <location>
        <begin position="469"/>
        <end position="471"/>
    </location>
</feature>
<feature type="helix" evidence="31">
    <location>
        <begin position="485"/>
        <end position="493"/>
    </location>
</feature>
<feature type="strand" evidence="31">
    <location>
        <begin position="497"/>
        <end position="501"/>
    </location>
</feature>
<feature type="helix" evidence="31">
    <location>
        <begin position="503"/>
        <end position="511"/>
    </location>
</feature>
<feature type="strand" evidence="31">
    <location>
        <begin position="519"/>
        <end position="522"/>
    </location>
</feature>
<feature type="strand" evidence="31">
    <location>
        <begin position="524"/>
        <end position="530"/>
    </location>
</feature>
<feature type="helix" evidence="31">
    <location>
        <begin position="531"/>
        <end position="534"/>
    </location>
</feature>
<feature type="strand" evidence="31">
    <location>
        <begin position="536"/>
        <end position="539"/>
    </location>
</feature>
<feature type="helix" evidence="31">
    <location>
        <begin position="540"/>
        <end position="548"/>
    </location>
</feature>
<feature type="strand" evidence="31">
    <location>
        <begin position="555"/>
        <end position="561"/>
    </location>
</feature>
<feature type="helix" evidence="31">
    <location>
        <begin position="565"/>
        <end position="571"/>
    </location>
</feature>
<feature type="turn" evidence="31">
    <location>
        <begin position="572"/>
        <end position="574"/>
    </location>
</feature>
<feature type="strand" evidence="31">
    <location>
        <begin position="575"/>
        <end position="577"/>
    </location>
</feature>
<feature type="strand" evidence="31">
    <location>
        <begin position="579"/>
        <end position="581"/>
    </location>
</feature>
<feature type="strand" evidence="31">
    <location>
        <begin position="591"/>
        <end position="599"/>
    </location>
</feature>
<feature type="helix" evidence="31">
    <location>
        <begin position="604"/>
        <end position="614"/>
    </location>
</feature>
<feature type="strand" evidence="31">
    <location>
        <begin position="619"/>
        <end position="625"/>
    </location>
</feature>
<feature type="helix" evidence="31">
    <location>
        <begin position="629"/>
        <end position="641"/>
    </location>
</feature>
<feature type="strand" evidence="31">
    <location>
        <begin position="646"/>
        <end position="649"/>
    </location>
</feature>
<feature type="strand" evidence="31">
    <location>
        <begin position="651"/>
        <end position="653"/>
    </location>
</feature>
<feature type="helix" evidence="31">
    <location>
        <begin position="655"/>
        <end position="667"/>
    </location>
</feature>
<feature type="strand" evidence="31">
    <location>
        <begin position="671"/>
        <end position="675"/>
    </location>
</feature>
<feature type="strand" evidence="31">
    <location>
        <begin position="679"/>
        <end position="682"/>
    </location>
</feature>
<feature type="strand" evidence="31">
    <location>
        <begin position="690"/>
        <end position="693"/>
    </location>
</feature>
<feature type="helix" evidence="31">
    <location>
        <begin position="700"/>
        <end position="708"/>
    </location>
</feature>
<feature type="strand" evidence="31">
    <location>
        <begin position="717"/>
        <end position="723"/>
    </location>
</feature>
<feature type="helix" evidence="31">
    <location>
        <begin position="731"/>
        <end position="741"/>
    </location>
</feature>
<name>DDX46_HUMAN</name>
<organism>
    <name type="scientific">Homo sapiens</name>
    <name type="common">Human</name>
    <dbReference type="NCBI Taxonomy" id="9606"/>
    <lineage>
        <taxon>Eukaryota</taxon>
        <taxon>Metazoa</taxon>
        <taxon>Chordata</taxon>
        <taxon>Craniata</taxon>
        <taxon>Vertebrata</taxon>
        <taxon>Euteleostomi</taxon>
        <taxon>Mammalia</taxon>
        <taxon>Eutheria</taxon>
        <taxon>Euarchontoglires</taxon>
        <taxon>Primates</taxon>
        <taxon>Haplorrhini</taxon>
        <taxon>Catarrhini</taxon>
        <taxon>Hominidae</taxon>
        <taxon>Homo</taxon>
    </lineage>
</organism>
<sequence>MGRESRHYRKRSASRGRSGSRSRSRSPSDKRSKRGDDRRSRSRDRDRRRERSRSRDKRRSRSRDRKRLRRSRSRERDRSRERRRSRSRDRRRSRSRSRGRRSRSSSPGNKSKKTENRSRSKEKTDGGESSKEKKKDKDDKEDEKEKDAGNFDQNKLEEEMRKRKERVEKWREEQRKKAMENIGELKKEIEEMKQGKKWSLEDDDDDEDDPAEAEKEGNEMEGEELDPLDAYMEEVKEEVKKFNMRSVKGGGGNEKKSGPTVTKVVTVVTTKKAVVDSDKKKGELMENDQDAMEYSSEEEEVDLQTALTGYQTKQRKLLEPVDHGKIEYEPFRKNFYVEVPELAKMSQEEVNVFRLEMEGITVKGKGCPKPIKSWVQCGISMKILNSLKKHGYEKPTPIQTQAIPAIMSGRDLIGIAKTGSGKTIAFLLPMFRHIMDQRSLEEGEGPIAVIMTPTRELALQITKECKKFSKTLGLRVVCVYGGTGISEQIAELKRGAEIIVCTPGRMIDMLAANSGRVTNLRRVTYVVLDEADRMFDMGFEPQVMRIVDNVRPDRQTVMFSATFPRAMEALARRILSKPIEVQVGGRSVVCSDVEQQVIVIEEEKKFLKLLELLGHYQESGSVIIFVDKQEHADGLLKDLMRASYPCMSLHGGIDQYDRDSIINDFKNGTCKLLVATSVAARGLDVKHLILVVNYSCPNHYEDYVHRAGRTGRAGNKGYAYTFITEDQARYAGDIIKALELSGTAVPPDLEKLWSDFKDQQKAEGKIIKKSSGFSGKGFKFDETEQALANERKKLQKAALGLQDSDDEDAAVDIDEQIESMFNSKKRVKDMAAPGTSSVPAPTAGNAEKLEIAKRLALRINAQKNLGIESQDVMQQATNAILRGGTILAPTVSAKTIAEQLAEKINAKLNYVPLEKQEEERQDGGQNESFKRYEEELEINDFPQTARWKVTSKEALQRISEYSEAAITIRGTYFPPGKEPKEGERKIYLAIESANELAVQKAKAEITRLIKEELIRLQNSYQPTNKGRYKVL</sequence>
<keyword id="KW-0002">3D-structure</keyword>
<keyword id="KW-0007">Acetylation</keyword>
<keyword id="KW-0067">ATP-binding</keyword>
<keyword id="KW-0175">Coiled coil</keyword>
<keyword id="KW-0347">Helicase</keyword>
<keyword id="KW-0378">Hydrolase</keyword>
<keyword id="KW-1017">Isopeptide bond</keyword>
<keyword id="KW-0449">Lipoprotein</keyword>
<keyword id="KW-0507">mRNA processing</keyword>
<keyword id="KW-0508">mRNA splicing</keyword>
<keyword id="KW-0519">Myristate</keyword>
<keyword id="KW-0547">Nucleotide-binding</keyword>
<keyword id="KW-0539">Nucleus</keyword>
<keyword id="KW-0597">Phosphoprotein</keyword>
<keyword id="KW-1267">Proteomics identification</keyword>
<keyword id="KW-1185">Reference proteome</keyword>
<keyword id="KW-0694">RNA-binding</keyword>
<keyword id="KW-0747">Spliceosome</keyword>
<keyword id="KW-0832">Ubl conjugation</keyword>
<dbReference type="EC" id="3.6.4.13"/>
<dbReference type="EMBL" id="AF106680">
    <property type="protein sequence ID" value="AAD43033.1"/>
    <property type="molecule type" value="mRNA"/>
</dbReference>
<dbReference type="EMBL" id="AB018344">
    <property type="protein sequence ID" value="BAA34521.2"/>
    <property type="status" value="ALT_INIT"/>
    <property type="molecule type" value="mRNA"/>
</dbReference>
<dbReference type="EMBL" id="BC012304">
    <property type="protein sequence ID" value="AAH12304.1"/>
    <property type="molecule type" value="mRNA"/>
</dbReference>
<dbReference type="EMBL" id="BK000565">
    <property type="protein sequence ID" value="DAA00076.1"/>
    <property type="molecule type" value="mRNA"/>
</dbReference>
<dbReference type="CCDS" id="CCDS34240.1"/>
<dbReference type="RefSeq" id="NP_001287789.1">
    <property type="nucleotide sequence ID" value="NM_001300860.1"/>
</dbReference>
<dbReference type="RefSeq" id="NP_055644.2">
    <property type="nucleotide sequence ID" value="NM_014829.3"/>
</dbReference>
<dbReference type="PDB" id="6Y50">
    <property type="method" value="EM"/>
    <property type="resolution" value="4.10 A"/>
    <property type="chains" value="p=1-1031"/>
</dbReference>
<dbReference type="PDB" id="6Y53">
    <property type="method" value="EM"/>
    <property type="resolution" value="7.10 A"/>
    <property type="chains" value="p=1-1031"/>
</dbReference>
<dbReference type="PDB" id="6Y5Q">
    <property type="method" value="EM"/>
    <property type="resolution" value="7.10 A"/>
    <property type="chains" value="p=1-1031"/>
</dbReference>
<dbReference type="PDB" id="7EVO">
    <property type="method" value="EM"/>
    <property type="resolution" value="2.50 A"/>
    <property type="chains" value="E=1-1031"/>
</dbReference>
<dbReference type="PDB" id="7Q3L">
    <property type="method" value="EM"/>
    <property type="resolution" value="2.30 A"/>
    <property type="chains" value="p=1-1031"/>
</dbReference>
<dbReference type="PDB" id="7VPX">
    <property type="method" value="EM"/>
    <property type="resolution" value="3.00 A"/>
    <property type="chains" value="E=1-1031"/>
</dbReference>
<dbReference type="PDBsum" id="6Y50"/>
<dbReference type="PDBsum" id="6Y53"/>
<dbReference type="PDBsum" id="6Y5Q"/>
<dbReference type="PDBsum" id="7EVO"/>
<dbReference type="PDBsum" id="7Q3L"/>
<dbReference type="PDBsum" id="7VPX"/>
<dbReference type="EMDB" id="EMD-10688"/>
<dbReference type="EMDB" id="EMD-10689"/>
<dbReference type="EMDB" id="EMD-13793"/>
<dbReference type="EMDB" id="EMD-32074"/>
<dbReference type="SMR" id="Q7L014"/>
<dbReference type="BioGRID" id="115210">
    <property type="interactions" value="231"/>
</dbReference>
<dbReference type="ComplexPortal" id="CPX-2539">
    <property type="entry name" value="U2 small nuclear ribonucleoprotein complex"/>
</dbReference>
<dbReference type="CORUM" id="Q7L014"/>
<dbReference type="FunCoup" id="Q7L014">
    <property type="interactions" value="4238"/>
</dbReference>
<dbReference type="IntAct" id="Q7L014">
    <property type="interactions" value="93"/>
</dbReference>
<dbReference type="MINT" id="Q7L014"/>
<dbReference type="STRING" id="9606.ENSP00000416534"/>
<dbReference type="GlyCosmos" id="Q7L014">
    <property type="glycosylation" value="1 site, 1 glycan"/>
</dbReference>
<dbReference type="GlyGen" id="Q7L014">
    <property type="glycosylation" value="4 sites, 1 O-linked glycan (2 sites)"/>
</dbReference>
<dbReference type="iPTMnet" id="Q7L014"/>
<dbReference type="MetOSite" id="Q7L014"/>
<dbReference type="PhosphoSitePlus" id="Q7L014"/>
<dbReference type="SwissPalm" id="Q7L014"/>
<dbReference type="BioMuta" id="DDX46"/>
<dbReference type="DMDM" id="116241326"/>
<dbReference type="jPOST" id="Q7L014"/>
<dbReference type="MassIVE" id="Q7L014"/>
<dbReference type="PaxDb" id="9606-ENSP00000416534"/>
<dbReference type="PeptideAtlas" id="Q7L014"/>
<dbReference type="ProteomicsDB" id="68726"/>
<dbReference type="Pumba" id="Q7L014"/>
<dbReference type="Antibodypedia" id="26347">
    <property type="antibodies" value="119 antibodies from 23 providers"/>
</dbReference>
<dbReference type="DNASU" id="9879"/>
<dbReference type="Ensembl" id="ENST00000354283.8">
    <property type="protein sequence ID" value="ENSP00000346236.4"/>
    <property type="gene ID" value="ENSG00000145833.16"/>
</dbReference>
<dbReference type="GeneID" id="9879"/>
<dbReference type="KEGG" id="hsa:9879"/>
<dbReference type="UCSC" id="uc003kzw.5">
    <property type="organism name" value="human"/>
</dbReference>
<dbReference type="AGR" id="HGNC:18681"/>
<dbReference type="CTD" id="9879"/>
<dbReference type="DisGeNET" id="9879"/>
<dbReference type="GeneCards" id="DDX46"/>
<dbReference type="HGNC" id="HGNC:18681">
    <property type="gene designation" value="DDX46"/>
</dbReference>
<dbReference type="HPA" id="ENSG00000145833">
    <property type="expression patterns" value="Low tissue specificity"/>
</dbReference>
<dbReference type="MIM" id="617848">
    <property type="type" value="gene"/>
</dbReference>
<dbReference type="neXtProt" id="NX_Q7L014"/>
<dbReference type="OpenTargets" id="ENSG00000145833"/>
<dbReference type="PharmGKB" id="PA134894452"/>
<dbReference type="VEuPathDB" id="HostDB:ENSG00000145833"/>
<dbReference type="eggNOG" id="KOG0334">
    <property type="taxonomic scope" value="Eukaryota"/>
</dbReference>
<dbReference type="GeneTree" id="ENSGT00940000157753"/>
<dbReference type="HOGENOM" id="CLU_003041_0_0_1"/>
<dbReference type="InParanoid" id="Q7L014"/>
<dbReference type="OrthoDB" id="196131at2759"/>
<dbReference type="PAN-GO" id="Q7L014">
    <property type="GO annotations" value="2 GO annotations based on evolutionary models"/>
</dbReference>
<dbReference type="PhylomeDB" id="Q7L014"/>
<dbReference type="TreeFam" id="TF354236"/>
<dbReference type="PathwayCommons" id="Q7L014"/>
<dbReference type="Reactome" id="R-HSA-72163">
    <property type="pathway name" value="mRNA Splicing - Major Pathway"/>
</dbReference>
<dbReference type="SignaLink" id="Q7L014"/>
<dbReference type="SIGNOR" id="Q7L014"/>
<dbReference type="BioGRID-ORCS" id="9879">
    <property type="hits" value="632 hits in 1166 CRISPR screens"/>
</dbReference>
<dbReference type="CD-CODE" id="6F24707C">
    <property type="entry name" value="Cajal body"/>
</dbReference>
<dbReference type="CD-CODE" id="804901D1">
    <property type="entry name" value="Nuclear speckle"/>
</dbReference>
<dbReference type="CD-CODE" id="91857CE7">
    <property type="entry name" value="Nucleolus"/>
</dbReference>
<dbReference type="ChiTaRS" id="DDX46">
    <property type="organism name" value="human"/>
</dbReference>
<dbReference type="GeneWiki" id="DDX46"/>
<dbReference type="GenomeRNAi" id="9879"/>
<dbReference type="Pharos" id="Q7L014">
    <property type="development level" value="Tbio"/>
</dbReference>
<dbReference type="PRO" id="PR:Q7L014"/>
<dbReference type="Proteomes" id="UP000005640">
    <property type="component" value="Chromosome 5"/>
</dbReference>
<dbReference type="RNAct" id="Q7L014">
    <property type="molecule type" value="protein"/>
</dbReference>
<dbReference type="Bgee" id="ENSG00000145833">
    <property type="expression patterns" value="Expressed in sural nerve and 211 other cell types or tissues"/>
</dbReference>
<dbReference type="ExpressionAtlas" id="Q7L014">
    <property type="expression patterns" value="baseline and differential"/>
</dbReference>
<dbReference type="GO" id="GO:0015030">
    <property type="term" value="C:Cajal body"/>
    <property type="evidence" value="ECO:0007669"/>
    <property type="project" value="UniProtKB-SubCell"/>
</dbReference>
<dbReference type="GO" id="GO:0001650">
    <property type="term" value="C:fibrillar center"/>
    <property type="evidence" value="ECO:0000314"/>
    <property type="project" value="HPA"/>
</dbReference>
<dbReference type="GO" id="GO:0016607">
    <property type="term" value="C:nuclear speck"/>
    <property type="evidence" value="ECO:0000314"/>
    <property type="project" value="HPA"/>
</dbReference>
<dbReference type="GO" id="GO:0005654">
    <property type="term" value="C:nucleoplasm"/>
    <property type="evidence" value="ECO:0000304"/>
    <property type="project" value="Reactome"/>
</dbReference>
<dbReference type="GO" id="GO:0005634">
    <property type="term" value="C:nucleus"/>
    <property type="evidence" value="ECO:0007005"/>
    <property type="project" value="UniProtKB"/>
</dbReference>
<dbReference type="GO" id="GO:0005681">
    <property type="term" value="C:spliceosomal complex"/>
    <property type="evidence" value="ECO:0000303"/>
    <property type="project" value="ComplexPortal"/>
</dbReference>
<dbReference type="GO" id="GO:0005686">
    <property type="term" value="C:U2 snRNP"/>
    <property type="evidence" value="ECO:0000303"/>
    <property type="project" value="ComplexPortal"/>
</dbReference>
<dbReference type="GO" id="GO:0005684">
    <property type="term" value="C:U2-type spliceosomal complex"/>
    <property type="evidence" value="ECO:0000314"/>
    <property type="project" value="UniProtKB"/>
</dbReference>
<dbReference type="GO" id="GO:0005524">
    <property type="term" value="F:ATP binding"/>
    <property type="evidence" value="ECO:0007669"/>
    <property type="project" value="UniProtKB-KW"/>
</dbReference>
<dbReference type="GO" id="GO:0016887">
    <property type="term" value="F:ATP hydrolysis activity"/>
    <property type="evidence" value="ECO:0007669"/>
    <property type="project" value="RHEA"/>
</dbReference>
<dbReference type="GO" id="GO:0003723">
    <property type="term" value="F:RNA binding"/>
    <property type="evidence" value="ECO:0007005"/>
    <property type="project" value="UniProtKB"/>
</dbReference>
<dbReference type="GO" id="GO:0003724">
    <property type="term" value="F:RNA helicase activity"/>
    <property type="evidence" value="ECO:0000304"/>
    <property type="project" value="Reactome"/>
</dbReference>
<dbReference type="GO" id="GO:0000398">
    <property type="term" value="P:mRNA splicing, via spliceosome"/>
    <property type="evidence" value="ECO:0000314"/>
    <property type="project" value="UniProtKB"/>
</dbReference>
<dbReference type="GO" id="GO:1903241">
    <property type="term" value="P:U2-type prespliceosome assembly"/>
    <property type="evidence" value="ECO:0000314"/>
    <property type="project" value="UniProtKB"/>
</dbReference>
<dbReference type="CDD" id="cd17953">
    <property type="entry name" value="DEADc_DDX46"/>
    <property type="match status" value="1"/>
</dbReference>
<dbReference type="CDD" id="cd22473">
    <property type="entry name" value="KH-I_DDX46"/>
    <property type="match status" value="1"/>
</dbReference>
<dbReference type="CDD" id="cd18787">
    <property type="entry name" value="SF2_C_DEAD"/>
    <property type="match status" value="1"/>
</dbReference>
<dbReference type="FunFam" id="3.40.50.300:FF:000079">
    <property type="entry name" value="probable ATP-dependent RNA helicase DDX17"/>
    <property type="match status" value="1"/>
</dbReference>
<dbReference type="FunFam" id="3.40.50.300:FF:000584">
    <property type="entry name" value="probable ATP-dependent RNA helicase DDX46"/>
    <property type="match status" value="1"/>
</dbReference>
<dbReference type="Gene3D" id="3.40.50.300">
    <property type="entry name" value="P-loop containing nucleotide triphosphate hydrolases"/>
    <property type="match status" value="2"/>
</dbReference>
<dbReference type="InterPro" id="IPR011545">
    <property type="entry name" value="DEAD/DEAH_box_helicase_dom"/>
</dbReference>
<dbReference type="InterPro" id="IPR014001">
    <property type="entry name" value="Helicase_ATP-bd"/>
</dbReference>
<dbReference type="InterPro" id="IPR001650">
    <property type="entry name" value="Helicase_C-like"/>
</dbReference>
<dbReference type="InterPro" id="IPR027417">
    <property type="entry name" value="P-loop_NTPase"/>
</dbReference>
<dbReference type="InterPro" id="IPR056149">
    <property type="entry name" value="PRP5/DDX46/KHDC4_KH"/>
</dbReference>
<dbReference type="InterPro" id="IPR000629">
    <property type="entry name" value="RNA-helicase_DEAD-box_CS"/>
</dbReference>
<dbReference type="InterPro" id="IPR014014">
    <property type="entry name" value="RNA_helicase_DEAD_Q_motif"/>
</dbReference>
<dbReference type="PANTHER" id="PTHR47958">
    <property type="entry name" value="ATP-DEPENDENT RNA HELICASE DBP3"/>
    <property type="match status" value="1"/>
</dbReference>
<dbReference type="Pfam" id="PF00270">
    <property type="entry name" value="DEAD"/>
    <property type="match status" value="1"/>
</dbReference>
<dbReference type="Pfam" id="PF00271">
    <property type="entry name" value="Helicase_C"/>
    <property type="match status" value="1"/>
</dbReference>
<dbReference type="Pfam" id="PF23469">
    <property type="entry name" value="KH_12"/>
    <property type="match status" value="1"/>
</dbReference>
<dbReference type="SMART" id="SM00487">
    <property type="entry name" value="DEXDc"/>
    <property type="match status" value="1"/>
</dbReference>
<dbReference type="SMART" id="SM00490">
    <property type="entry name" value="HELICc"/>
    <property type="match status" value="1"/>
</dbReference>
<dbReference type="SUPFAM" id="SSF52540">
    <property type="entry name" value="P-loop containing nucleoside triphosphate hydrolases"/>
    <property type="match status" value="2"/>
</dbReference>
<dbReference type="PROSITE" id="PS00039">
    <property type="entry name" value="DEAD_ATP_HELICASE"/>
    <property type="match status" value="1"/>
</dbReference>
<dbReference type="PROSITE" id="PS51192">
    <property type="entry name" value="HELICASE_ATP_BIND_1"/>
    <property type="match status" value="1"/>
</dbReference>
<dbReference type="PROSITE" id="PS51194">
    <property type="entry name" value="HELICASE_CTER"/>
    <property type="match status" value="1"/>
</dbReference>
<dbReference type="PROSITE" id="PS51195">
    <property type="entry name" value="Q_MOTIF"/>
    <property type="match status" value="1"/>
</dbReference>
<reference key="1">
    <citation type="submission" date="1998-11" db="EMBL/GenBank/DDBJ databases">
        <title>Human RNA helicase gene.</title>
        <authorList>
            <person name="Song H."/>
            <person name="Peng Y."/>
            <person name="Dai M."/>
            <person name="Huang Q."/>
            <person name="Mao Y."/>
            <person name="Zhang Q."/>
            <person name="Mao M."/>
            <person name="Fu G."/>
            <person name="Luo M."/>
            <person name="Chen J."/>
            <person name="Hu R."/>
        </authorList>
    </citation>
    <scope>NUCLEOTIDE SEQUENCE [MRNA]</scope>
    <source>
        <tissue>Pituitary tumor</tissue>
    </source>
</reference>
<reference key="2">
    <citation type="journal article" date="1998" name="DNA Res.">
        <title>Prediction of the coding sequences of unidentified human genes. XI. The complete sequences of 100 new cDNA clones from brain which code for large proteins in vitro.</title>
        <authorList>
            <person name="Nagase T."/>
            <person name="Ishikawa K."/>
            <person name="Suyama M."/>
            <person name="Kikuno R."/>
            <person name="Miyajima N."/>
            <person name="Tanaka A."/>
            <person name="Kotani H."/>
            <person name="Nomura N."/>
            <person name="Ohara O."/>
        </authorList>
    </citation>
    <scope>NUCLEOTIDE SEQUENCE [LARGE SCALE MRNA]</scope>
    <source>
        <tissue>Brain</tissue>
    </source>
</reference>
<reference key="3">
    <citation type="journal article" date="2004" name="Genome Res.">
        <title>The status, quality, and expansion of the NIH full-length cDNA project: the Mammalian Gene Collection (MGC).</title>
        <authorList>
            <consortium name="The MGC Project Team"/>
        </authorList>
    </citation>
    <scope>NUCLEOTIDE SEQUENCE [LARGE SCALE MRNA]</scope>
    <source>
        <tissue>Eye</tissue>
    </source>
</reference>
<reference key="4">
    <citation type="journal article" date="2002" name="EMBO J.">
        <title>Characterization of novel SF3b and 17S U2 snRNP proteins, including a human Prp5p homologue and an SF3b DEAD-box protein.</title>
        <authorList>
            <person name="Will C.L."/>
            <person name="Urlaub H."/>
            <person name="Achsel T."/>
            <person name="Gentzel M."/>
            <person name="Wilm M."/>
            <person name="Luehrmann R."/>
        </authorList>
    </citation>
    <scope>IDENTIFICATION BY MASS SPECTROMETRY</scope>
    <scope>FUNCTION</scope>
    <scope>SUBUNIT</scope>
    <scope>SUBCELLULAR LOCATION</scope>
</reference>
<reference key="5">
    <citation type="journal article" date="2006" name="Cell">
        <title>Global, in vivo, and site-specific phosphorylation dynamics in signaling networks.</title>
        <authorList>
            <person name="Olsen J.V."/>
            <person name="Blagoev B."/>
            <person name="Gnad F."/>
            <person name="Macek B."/>
            <person name="Kumar C."/>
            <person name="Mortensen P."/>
            <person name="Mann M."/>
        </authorList>
    </citation>
    <scope>PHOSPHORYLATION [LARGE SCALE ANALYSIS] AT SER-804</scope>
    <scope>IDENTIFICATION BY MASS SPECTROMETRY [LARGE SCALE ANALYSIS]</scope>
    <source>
        <tissue>Cervix carcinoma</tissue>
    </source>
</reference>
<reference key="6">
    <citation type="journal article" date="2008" name="Proc. Natl. Acad. Sci. U.S.A.">
        <title>A quantitative atlas of mitotic phosphorylation.</title>
        <authorList>
            <person name="Dephoure N."/>
            <person name="Zhou C."/>
            <person name="Villen J."/>
            <person name="Beausoleil S.A."/>
            <person name="Bakalarski C.E."/>
            <person name="Elledge S.J."/>
            <person name="Gygi S.P."/>
        </authorList>
    </citation>
    <scope>PHOSPHORYLATION [LARGE SCALE ANALYSIS] AT TYR-294; SER-295; SER-296 AND SER-804</scope>
    <scope>IDENTIFICATION BY MASS SPECTROMETRY [LARGE SCALE ANALYSIS]</scope>
    <source>
        <tissue>Cervix carcinoma</tissue>
    </source>
</reference>
<reference key="7">
    <citation type="journal article" date="2009" name="Anal. Chem.">
        <title>Lys-N and trypsin cover complementary parts of the phosphoproteome in a refined SCX-based approach.</title>
        <authorList>
            <person name="Gauci S."/>
            <person name="Helbig A.O."/>
            <person name="Slijper M."/>
            <person name="Krijgsveld J."/>
            <person name="Heck A.J."/>
            <person name="Mohammed S."/>
        </authorList>
    </citation>
    <scope>IDENTIFICATION BY MASS SPECTROMETRY [LARGE SCALE ANALYSIS]</scope>
</reference>
<reference key="8">
    <citation type="journal article" date="2009" name="Sci. Signal.">
        <title>Quantitative phosphoproteomic analysis of T cell receptor signaling reveals system-wide modulation of protein-protein interactions.</title>
        <authorList>
            <person name="Mayya V."/>
            <person name="Lundgren D.H."/>
            <person name="Hwang S.-I."/>
            <person name="Rezaul K."/>
            <person name="Wu L."/>
            <person name="Eng J.K."/>
            <person name="Rodionov V."/>
            <person name="Han D.K."/>
        </authorList>
    </citation>
    <scope>PHOSPHORYLATION [LARGE SCALE ANALYSIS] AT TYR-294; SER-295; SER-296 AND SER-804</scope>
    <scope>IDENTIFICATION BY MASS SPECTROMETRY [LARGE SCALE ANALYSIS]</scope>
    <source>
        <tissue>Leukemic T-cell</tissue>
    </source>
</reference>
<reference key="9">
    <citation type="journal article" date="2009" name="Science">
        <title>Lysine acetylation targets protein complexes and co-regulates major cellular functions.</title>
        <authorList>
            <person name="Choudhary C."/>
            <person name="Kumar C."/>
            <person name="Gnad F."/>
            <person name="Nielsen M.L."/>
            <person name="Rehman M."/>
            <person name="Walther T.C."/>
            <person name="Olsen J.V."/>
            <person name="Mann M."/>
        </authorList>
    </citation>
    <scope>ACETYLATION [LARGE SCALE ANALYSIS] AT LYS-263 AND LYS-776</scope>
    <scope>IDENTIFICATION BY MASS SPECTROMETRY [LARGE SCALE ANALYSIS]</scope>
</reference>
<reference key="10">
    <citation type="journal article" date="2010" name="Sci. Signal.">
        <title>Quantitative phosphoproteomics reveals widespread full phosphorylation site occupancy during mitosis.</title>
        <authorList>
            <person name="Olsen J.V."/>
            <person name="Vermeulen M."/>
            <person name="Santamaria A."/>
            <person name="Kumar C."/>
            <person name="Miller M.L."/>
            <person name="Jensen L.J."/>
            <person name="Gnad F."/>
            <person name="Cox J."/>
            <person name="Jensen T.S."/>
            <person name="Nigg E.A."/>
            <person name="Brunak S."/>
            <person name="Mann M."/>
        </authorList>
    </citation>
    <scope>PHOSPHORYLATION [LARGE SCALE ANALYSIS] AT SER-804</scope>
    <scope>IDENTIFICATION BY MASS SPECTROMETRY [LARGE SCALE ANALYSIS]</scope>
    <source>
        <tissue>Cervix carcinoma</tissue>
    </source>
</reference>
<reference key="11">
    <citation type="journal article" date="2011" name="BMC Syst. Biol.">
        <title>Initial characterization of the human central proteome.</title>
        <authorList>
            <person name="Burkard T.R."/>
            <person name="Planyavsky M."/>
            <person name="Kaupe I."/>
            <person name="Breitwieser F.P."/>
            <person name="Buerckstuemmer T."/>
            <person name="Bennett K.L."/>
            <person name="Superti-Furga G."/>
            <person name="Colinge J."/>
        </authorList>
    </citation>
    <scope>IDENTIFICATION BY MASS SPECTROMETRY [LARGE SCALE ANALYSIS]</scope>
</reference>
<reference key="12">
    <citation type="journal article" date="2011" name="Sci. Signal.">
        <title>System-wide temporal characterization of the proteome and phosphoproteome of human embryonic stem cell differentiation.</title>
        <authorList>
            <person name="Rigbolt K.T."/>
            <person name="Prokhorova T.A."/>
            <person name="Akimov V."/>
            <person name="Henningsen J."/>
            <person name="Johansen P.T."/>
            <person name="Kratchmarova I."/>
            <person name="Kassem M."/>
            <person name="Mann M."/>
            <person name="Olsen J.V."/>
            <person name="Blagoev B."/>
        </authorList>
    </citation>
    <scope>PHOSPHORYLATION [LARGE SCALE ANALYSIS] AT SER-804</scope>
    <scope>IDENTIFICATION BY MASS SPECTROMETRY [LARGE SCALE ANALYSIS]</scope>
</reference>
<reference key="13">
    <citation type="journal article" date="2013" name="J. Proteome Res.">
        <title>Toward a comprehensive characterization of a human cancer cell phosphoproteome.</title>
        <authorList>
            <person name="Zhou H."/>
            <person name="Di Palma S."/>
            <person name="Preisinger C."/>
            <person name="Peng M."/>
            <person name="Polat A.N."/>
            <person name="Heck A.J."/>
            <person name="Mohammed S."/>
        </authorList>
    </citation>
    <scope>PHOSPHORYLATION [LARGE SCALE ANALYSIS] AT SER-346; SER-804 AND SER-928</scope>
    <scope>IDENTIFICATION BY MASS SPECTROMETRY [LARGE SCALE ANALYSIS]</scope>
    <source>
        <tissue>Cervix carcinoma</tissue>
        <tissue>Erythroleukemia</tissue>
    </source>
</reference>
<reference key="14">
    <citation type="journal article" date="2014" name="J. Proteomics">
        <title>An enzyme assisted RP-RPLC approach for in-depth analysis of human liver phosphoproteome.</title>
        <authorList>
            <person name="Bian Y."/>
            <person name="Song C."/>
            <person name="Cheng K."/>
            <person name="Dong M."/>
            <person name="Wang F."/>
            <person name="Huang J."/>
            <person name="Sun D."/>
            <person name="Wang L."/>
            <person name="Ye M."/>
            <person name="Zou H."/>
        </authorList>
    </citation>
    <scope>IDENTIFICATION BY MASS SPECTROMETRY [LARGE SCALE ANALYSIS]</scope>
    <source>
        <tissue>Liver</tissue>
    </source>
</reference>
<reference key="15">
    <citation type="journal article" date="2014" name="Nat. Commun.">
        <title>Global profiling of co- and post-translationally N-myristoylated proteomes in human cells.</title>
        <authorList>
            <person name="Thinon E."/>
            <person name="Serwa R.A."/>
            <person name="Broncel M."/>
            <person name="Brannigan J.A."/>
            <person name="Brassat U."/>
            <person name="Wright M.H."/>
            <person name="Heal W.P."/>
            <person name="Wilkinson A.J."/>
            <person name="Mann D.J."/>
            <person name="Tate E.W."/>
        </authorList>
    </citation>
    <scope>MYRISTOYLATION AT GLY-2</scope>
    <scope>CLEAVAGE OF INITIATOR METHIONINE</scope>
    <scope>IDENTIFICATION BY MASS SPECTROMETRY</scope>
</reference>
<reference key="16">
    <citation type="journal article" date="2014" name="Nat. Struct. Mol. Biol.">
        <title>Uncovering global SUMOylation signaling networks in a site-specific manner.</title>
        <authorList>
            <person name="Hendriks I.A."/>
            <person name="D'Souza R.C."/>
            <person name="Yang B."/>
            <person name="Verlaan-de Vries M."/>
            <person name="Mann M."/>
            <person name="Vertegaal A.C."/>
        </authorList>
    </citation>
    <scope>SUMOYLATION [LARGE SCALE ANALYSIS] AT LYS-186</scope>
    <scope>IDENTIFICATION BY MASS SPECTROMETRY [LARGE SCALE ANALYSIS]</scope>
</reference>
<reference key="17">
    <citation type="journal article" date="2015" name="Mol. Cell. Proteomics">
        <title>System-wide analysis of SUMOylation dynamics in response to replication stress reveals novel small ubiquitin-like modified target proteins and acceptor lysines relevant for genome stability.</title>
        <authorList>
            <person name="Xiao Z."/>
            <person name="Chang J.G."/>
            <person name="Hendriks I.A."/>
            <person name="Sigurdsson J.O."/>
            <person name="Olsen J.V."/>
            <person name="Vertegaal A.C."/>
        </authorList>
    </citation>
    <scope>SUMOYLATION [LARGE SCALE ANALYSIS] AT LYS-186</scope>
    <scope>IDENTIFICATION BY MASS SPECTROMETRY [LARGE SCALE ANALYSIS]</scope>
</reference>
<reference key="18">
    <citation type="journal article" date="2017" name="Nat. Struct. Mol. Biol.">
        <title>Site-specific mapping of the human SUMO proteome reveals co-modification with phosphorylation.</title>
        <authorList>
            <person name="Hendriks I.A."/>
            <person name="Lyon D."/>
            <person name="Young C."/>
            <person name="Jensen L.J."/>
            <person name="Vertegaal A.C."/>
            <person name="Nielsen M.L."/>
        </authorList>
    </citation>
    <scope>SUMOYLATION [LARGE SCALE ANALYSIS] AT LYS-186; LYS-325; LYS-779; LYS-907 AND LYS-915</scope>
    <scope>IDENTIFICATION BY MASS SPECTROMETRY [LARGE SCALE ANALYSIS]</scope>
</reference>
<reference key="19">
    <citation type="journal article" date="2023" name="Nat. Commun.">
        <title>Mechanisms of the RNA helicases DDX42 and DDX46 in human U2 snRNP assembly.</title>
        <authorList>
            <person name="Yang F."/>
            <person name="Bian T."/>
            <person name="Zhan X."/>
            <person name="Chen Z."/>
            <person name="Xing Z."/>
            <person name="Larsen N.A."/>
            <person name="Zhang X."/>
            <person name="Shi Y."/>
        </authorList>
    </citation>
    <scope>FUNCTION</scope>
    <scope>IDENTIFICATION IN THE 17S U2 SNRNP COMPLEX</scope>
</reference>
<reference evidence="17 18 19" key="20">
    <citation type="journal article" date="2020" name="Nature">
        <title>Molecular architecture of the human 17S U2 snRNP.</title>
        <authorList>
            <person name="Zhang Z."/>
            <person name="Will C.L."/>
            <person name="Bertram K."/>
            <person name="Dybkov O."/>
            <person name="Hartmuth K."/>
            <person name="Agafonov D.E."/>
            <person name="Hofele R."/>
            <person name="Urlaub H."/>
            <person name="Kastner B."/>
            <person name="Luehrmann R."/>
            <person name="Stark H."/>
        </authorList>
    </citation>
    <scope>STRUCTURE BY ELECTRON MICROSCOPY (4.10 ANGSTROMS) IN COMPLEX WITH THE 17S U2 SNRNP COMPLEX</scope>
    <scope>FUNCTION</scope>
    <scope>IDENTIFICATION IN THE 17S U2 SNRNP COMPLEX</scope>
</reference>
<reference evidence="20" key="21">
    <citation type="journal article" date="2022" name="Science">
        <title>Structural basis of branch site recognition by the human spliceosome.</title>
        <authorList>
            <person name="Tholen J."/>
            <person name="Razew M."/>
            <person name="Weis F."/>
            <person name="Galej W.P."/>
        </authorList>
    </citation>
    <scope>STRUCTURE BY ELECTRON MICROSCOPY (2.70 ANGSTROMS) IN COMPLEX WITH THE 17S U2 SNRNP COMPLEX</scope>
    <scope>IDENTIFICATION IN THE 17S U2 SNRNP COMPLEX</scope>
</reference>
<evidence type="ECO:0000250" key="1">
    <source>
        <dbReference type="UniProtKB" id="Q569Z5"/>
    </source>
</evidence>
<evidence type="ECO:0000250" key="2">
    <source>
        <dbReference type="UniProtKB" id="Q62780"/>
    </source>
</evidence>
<evidence type="ECO:0000255" key="3"/>
<evidence type="ECO:0000255" key="4">
    <source>
        <dbReference type="PROSITE-ProRule" id="PRU00541"/>
    </source>
</evidence>
<evidence type="ECO:0000255" key="5">
    <source>
        <dbReference type="PROSITE-ProRule" id="PRU00542"/>
    </source>
</evidence>
<evidence type="ECO:0000256" key="6">
    <source>
        <dbReference type="SAM" id="MobiDB-lite"/>
    </source>
</evidence>
<evidence type="ECO:0000269" key="7">
    <source>
    </source>
</evidence>
<evidence type="ECO:0000269" key="8">
    <source>
    </source>
</evidence>
<evidence type="ECO:0000269" key="9">
    <source>
    </source>
</evidence>
<evidence type="ECO:0000269" key="10">
    <source>
    </source>
</evidence>
<evidence type="ECO:0000269" key="11">
    <source>
    </source>
</evidence>
<evidence type="ECO:0000303" key="12">
    <source>
    </source>
</evidence>
<evidence type="ECO:0000303" key="13">
    <source>
    </source>
</evidence>
<evidence type="ECO:0000303" key="14">
    <source>
    </source>
</evidence>
<evidence type="ECO:0000305" key="15"/>
<evidence type="ECO:0000312" key="16">
    <source>
        <dbReference type="HGNC" id="HGNC:18681"/>
    </source>
</evidence>
<evidence type="ECO:0007744" key="17">
    <source>
        <dbReference type="PDB" id="6Y50"/>
    </source>
</evidence>
<evidence type="ECO:0007744" key="18">
    <source>
        <dbReference type="PDB" id="6Y53"/>
    </source>
</evidence>
<evidence type="ECO:0007744" key="19">
    <source>
        <dbReference type="PDB" id="6Y5Q"/>
    </source>
</evidence>
<evidence type="ECO:0007744" key="20">
    <source>
        <dbReference type="PDB" id="7Q3L"/>
    </source>
</evidence>
<evidence type="ECO:0007744" key="21">
    <source>
    </source>
</evidence>
<evidence type="ECO:0007744" key="22">
    <source>
    </source>
</evidence>
<evidence type="ECO:0007744" key="23">
    <source>
    </source>
</evidence>
<evidence type="ECO:0007744" key="24">
    <source>
    </source>
</evidence>
<evidence type="ECO:0007744" key="25">
    <source>
    </source>
</evidence>
<evidence type="ECO:0007744" key="26">
    <source>
    </source>
</evidence>
<evidence type="ECO:0007744" key="27">
    <source>
    </source>
</evidence>
<evidence type="ECO:0007744" key="28">
    <source>
    </source>
</evidence>
<evidence type="ECO:0007744" key="29">
    <source>
    </source>
</evidence>
<evidence type="ECO:0007744" key="30">
    <source>
    </source>
</evidence>
<evidence type="ECO:0007829" key="31">
    <source>
        <dbReference type="PDB" id="7EVO"/>
    </source>
</evidence>
<evidence type="ECO:0007829" key="32">
    <source>
        <dbReference type="PDB" id="7Q3L"/>
    </source>
</evidence>
<comment type="function">
    <text evidence="7 9 10 11">Component of the 17S U2 SnRNP complex of the spliceosome, a large ribonucleoprotein complex that removes introns from transcribed pre-mRNAs (PubMed:12234937, PubMed:32494006, PubMed:34822310, PubMed:36797247). The 17S U2 SnRNP complex (1) directly participates in early spliceosome assembly and (2) mediates recognition of the intron branch site during pre-mRNA splicing by promoting the selection of the pre-mRNA branch-site adenosine, the nucleophile for the first step of splicing (PubMed:32494006, PubMed:34822310). Within the 17S U2 SnRNP complex, DDX46 plays essential roles during assembly of pre-spliceosome and proofreading of the branch site (PubMed:34822310).</text>
</comment>
<comment type="catalytic activity">
    <reaction>
        <text>ATP + H2O = ADP + phosphate + H(+)</text>
        <dbReference type="Rhea" id="RHEA:13065"/>
        <dbReference type="ChEBI" id="CHEBI:15377"/>
        <dbReference type="ChEBI" id="CHEBI:15378"/>
        <dbReference type="ChEBI" id="CHEBI:30616"/>
        <dbReference type="ChEBI" id="CHEBI:43474"/>
        <dbReference type="ChEBI" id="CHEBI:456216"/>
        <dbReference type="EC" id="3.6.4.13"/>
    </reaction>
</comment>
<comment type="subunit">
    <text evidence="7 9 10 11">Component of the 17S U2 SnRNP complex, a ribonucleoprotein complex that contains small nuclear RNA (snRNA) U2 and a number of specific proteins (PubMed:12234937, PubMed:32494006, PubMed:34822310, PubMed:36797247). Within the 17S U2 SnRNP complex, DDX46 is part of the SF3B subcomplex, which is required for 'A' complex assembly formed by the stable binding of U2 snRNP to the branchpoint sequence in pre-mRNA (PubMed:12234937). Recruited to the 17S U2 SnRNP complex following release of DDX42; DDX42 and DDX46 bind the SF3B subcomplex in a competitive manner (PubMed:36797247).</text>
</comment>
<comment type="interaction">
    <interactant intactId="EBI-2555356">
        <id>Q7L014</id>
    </interactant>
    <interactant intactId="EBI-593303">
        <id>P78362</id>
        <label>SRPK2</label>
    </interactant>
    <organismsDiffer>false</organismsDiffer>
    <experiments>4</experiments>
</comment>
<comment type="subcellular location">
    <subcellularLocation>
        <location evidence="7">Nucleus speckle</location>
    </subcellularLocation>
    <subcellularLocation>
        <location evidence="7">Nucleus</location>
        <location evidence="7">Cajal body</location>
    </subcellularLocation>
    <text evidence="7">Present in Cajal bodies (CBs) and nuclear speckles.</text>
</comment>
<comment type="similarity">
    <text evidence="15">Belongs to the DEAD box helicase family. DDX46/PRP5 subfamily.</text>
</comment>
<comment type="sequence caution" evidence="15">
    <conflict type="erroneous initiation">
        <sequence resource="EMBL-CDS" id="BAA34521"/>
    </conflict>
</comment>
<accession>Q7L014</accession>
<accession>O94894</accession>
<accession>Q96EI0</accession>
<accession>Q9Y658</accession>